<accession>A1KM58</accession>
<dbReference type="EC" id="3.4.21.88" evidence="1"/>
<dbReference type="EMBL" id="AM408590">
    <property type="protein sequence ID" value="CAL72721.1"/>
    <property type="status" value="ALT_INIT"/>
    <property type="molecule type" value="Genomic_DNA"/>
</dbReference>
<dbReference type="RefSeq" id="WP_019283510.1">
    <property type="nucleotide sequence ID" value="NC_008769.1"/>
</dbReference>
<dbReference type="SMR" id="A1KM58"/>
<dbReference type="MEROPS" id="S24.001"/>
<dbReference type="KEGG" id="mbb:BCG_2733"/>
<dbReference type="HOGENOM" id="CLU_066192_45_0_11"/>
<dbReference type="Proteomes" id="UP000001472">
    <property type="component" value="Chromosome"/>
</dbReference>
<dbReference type="GO" id="GO:0003677">
    <property type="term" value="F:DNA binding"/>
    <property type="evidence" value="ECO:0007669"/>
    <property type="project" value="UniProtKB-UniRule"/>
</dbReference>
<dbReference type="GO" id="GO:0004252">
    <property type="term" value="F:serine-type endopeptidase activity"/>
    <property type="evidence" value="ECO:0007669"/>
    <property type="project" value="UniProtKB-UniRule"/>
</dbReference>
<dbReference type="GO" id="GO:0006281">
    <property type="term" value="P:DNA repair"/>
    <property type="evidence" value="ECO:0007669"/>
    <property type="project" value="UniProtKB-UniRule"/>
</dbReference>
<dbReference type="GO" id="GO:0006260">
    <property type="term" value="P:DNA replication"/>
    <property type="evidence" value="ECO:0007669"/>
    <property type="project" value="UniProtKB-UniRule"/>
</dbReference>
<dbReference type="GO" id="GO:0045892">
    <property type="term" value="P:negative regulation of DNA-templated transcription"/>
    <property type="evidence" value="ECO:0007669"/>
    <property type="project" value="UniProtKB-UniRule"/>
</dbReference>
<dbReference type="GO" id="GO:0006508">
    <property type="term" value="P:proteolysis"/>
    <property type="evidence" value="ECO:0007669"/>
    <property type="project" value="InterPro"/>
</dbReference>
<dbReference type="GO" id="GO:0009432">
    <property type="term" value="P:SOS response"/>
    <property type="evidence" value="ECO:0007669"/>
    <property type="project" value="UniProtKB-UniRule"/>
</dbReference>
<dbReference type="CDD" id="cd06529">
    <property type="entry name" value="S24_LexA-like"/>
    <property type="match status" value="1"/>
</dbReference>
<dbReference type="FunFam" id="1.10.10.10:FF:000009">
    <property type="entry name" value="LexA repressor"/>
    <property type="match status" value="1"/>
</dbReference>
<dbReference type="FunFam" id="2.10.109.10:FF:000001">
    <property type="entry name" value="LexA repressor"/>
    <property type="match status" value="1"/>
</dbReference>
<dbReference type="Gene3D" id="2.10.109.10">
    <property type="entry name" value="Umud Fragment, subunit A"/>
    <property type="match status" value="1"/>
</dbReference>
<dbReference type="Gene3D" id="1.10.10.10">
    <property type="entry name" value="Winged helix-like DNA-binding domain superfamily/Winged helix DNA-binding domain"/>
    <property type="match status" value="1"/>
</dbReference>
<dbReference type="HAMAP" id="MF_00015">
    <property type="entry name" value="LexA"/>
    <property type="match status" value="1"/>
</dbReference>
<dbReference type="InterPro" id="IPR006200">
    <property type="entry name" value="LexA"/>
</dbReference>
<dbReference type="InterPro" id="IPR039418">
    <property type="entry name" value="LexA-like"/>
</dbReference>
<dbReference type="InterPro" id="IPR036286">
    <property type="entry name" value="LexA/Signal_pep-like_sf"/>
</dbReference>
<dbReference type="InterPro" id="IPR006199">
    <property type="entry name" value="LexA_DNA-bd_dom"/>
</dbReference>
<dbReference type="InterPro" id="IPR050077">
    <property type="entry name" value="LexA_repressor"/>
</dbReference>
<dbReference type="InterPro" id="IPR006197">
    <property type="entry name" value="Peptidase_S24_LexA"/>
</dbReference>
<dbReference type="InterPro" id="IPR015927">
    <property type="entry name" value="Peptidase_S24_S26A/B/C"/>
</dbReference>
<dbReference type="InterPro" id="IPR036388">
    <property type="entry name" value="WH-like_DNA-bd_sf"/>
</dbReference>
<dbReference type="InterPro" id="IPR036390">
    <property type="entry name" value="WH_DNA-bd_sf"/>
</dbReference>
<dbReference type="NCBIfam" id="TIGR00498">
    <property type="entry name" value="lexA"/>
    <property type="match status" value="1"/>
</dbReference>
<dbReference type="PANTHER" id="PTHR33516">
    <property type="entry name" value="LEXA REPRESSOR"/>
    <property type="match status" value="1"/>
</dbReference>
<dbReference type="PANTHER" id="PTHR33516:SF2">
    <property type="entry name" value="LEXA REPRESSOR-RELATED"/>
    <property type="match status" value="1"/>
</dbReference>
<dbReference type="Pfam" id="PF01726">
    <property type="entry name" value="LexA_DNA_bind"/>
    <property type="match status" value="1"/>
</dbReference>
<dbReference type="Pfam" id="PF00717">
    <property type="entry name" value="Peptidase_S24"/>
    <property type="match status" value="1"/>
</dbReference>
<dbReference type="PRINTS" id="PR00726">
    <property type="entry name" value="LEXASERPTASE"/>
</dbReference>
<dbReference type="SUPFAM" id="SSF51306">
    <property type="entry name" value="LexA/Signal peptidase"/>
    <property type="match status" value="1"/>
</dbReference>
<dbReference type="SUPFAM" id="SSF46785">
    <property type="entry name" value="Winged helix' DNA-binding domain"/>
    <property type="match status" value="1"/>
</dbReference>
<name>LEXA_MYCBP</name>
<evidence type="ECO:0000255" key="1">
    <source>
        <dbReference type="HAMAP-Rule" id="MF_00015"/>
    </source>
</evidence>
<evidence type="ECO:0000256" key="2">
    <source>
        <dbReference type="SAM" id="MobiDB-lite"/>
    </source>
</evidence>
<evidence type="ECO:0000305" key="3"/>
<keyword id="KW-0068">Autocatalytic cleavage</keyword>
<keyword id="KW-0227">DNA damage</keyword>
<keyword id="KW-0234">DNA repair</keyword>
<keyword id="KW-0235">DNA replication</keyword>
<keyword id="KW-0238">DNA-binding</keyword>
<keyword id="KW-0378">Hydrolase</keyword>
<keyword id="KW-0678">Repressor</keyword>
<keyword id="KW-0742">SOS response</keyword>
<keyword id="KW-0804">Transcription</keyword>
<keyword id="KW-0805">Transcription regulation</keyword>
<proteinExistence type="inferred from homology"/>
<comment type="function">
    <text evidence="1">Represses a number of genes involved in the response to DNA damage (SOS response), including recA and lexA. In the presence of single-stranded DNA, RecA interacts with LexA causing an autocatalytic cleavage which disrupts the DNA-binding part of LexA, leading to derepression of the SOS regulon and eventually DNA repair.</text>
</comment>
<comment type="catalytic activity">
    <reaction evidence="1">
        <text>Hydrolysis of Ala-|-Gly bond in repressor LexA.</text>
        <dbReference type="EC" id="3.4.21.88"/>
    </reaction>
</comment>
<comment type="subunit">
    <text evidence="1">Homodimer.</text>
</comment>
<comment type="similarity">
    <text evidence="1">Belongs to the peptidase S24 family.</text>
</comment>
<comment type="sequence caution" evidence="3">
    <conflict type="erroneous initiation">
        <sequence resource="EMBL-CDS" id="CAL72721"/>
    </conflict>
    <text>Truncated N-terminus.</text>
</comment>
<feature type="chain" id="PRO_1000001304" description="LexA repressor">
    <location>
        <begin position="1"/>
        <end position="236"/>
    </location>
</feature>
<feature type="DNA-binding region" description="H-T-H motif" evidence="1">
    <location>
        <begin position="51"/>
        <end position="71"/>
    </location>
</feature>
<feature type="region of interest" description="Disordered" evidence="2">
    <location>
        <begin position="1"/>
        <end position="25"/>
    </location>
</feature>
<feature type="active site" description="For autocatalytic cleavage activity" evidence="1">
    <location>
        <position position="160"/>
    </location>
</feature>
<feature type="active site" description="For autocatalytic cleavage activity" evidence="1">
    <location>
        <position position="197"/>
    </location>
</feature>
<feature type="site" description="Cleavage; by autolysis" evidence="1">
    <location>
        <begin position="125"/>
        <end position="126"/>
    </location>
</feature>
<organism>
    <name type="scientific">Mycobacterium bovis (strain BCG / Pasteur 1173P2)</name>
    <dbReference type="NCBI Taxonomy" id="410289"/>
    <lineage>
        <taxon>Bacteria</taxon>
        <taxon>Bacillati</taxon>
        <taxon>Actinomycetota</taxon>
        <taxon>Actinomycetes</taxon>
        <taxon>Mycobacteriales</taxon>
        <taxon>Mycobacteriaceae</taxon>
        <taxon>Mycobacterium</taxon>
        <taxon>Mycobacterium tuberculosis complex</taxon>
    </lineage>
</organism>
<protein>
    <recommendedName>
        <fullName evidence="1">LexA repressor</fullName>
        <ecNumber evidence="1">3.4.21.88</ecNumber>
    </recommendedName>
</protein>
<reference key="1">
    <citation type="journal article" date="2007" name="Proc. Natl. Acad. Sci. U.S.A.">
        <title>Genome plasticity of BCG and impact on vaccine efficacy.</title>
        <authorList>
            <person name="Brosch R."/>
            <person name="Gordon S.V."/>
            <person name="Garnier T."/>
            <person name="Eiglmeier K."/>
            <person name="Frigui W."/>
            <person name="Valenti P."/>
            <person name="Dos Santos S."/>
            <person name="Duthoy S."/>
            <person name="Lacroix C."/>
            <person name="Garcia-Pelayo C."/>
            <person name="Inwald J.K."/>
            <person name="Golby P."/>
            <person name="Garcia J.N."/>
            <person name="Hewinson R.G."/>
            <person name="Behr M.A."/>
            <person name="Quail M.A."/>
            <person name="Churcher C."/>
            <person name="Barrell B.G."/>
            <person name="Parkhill J."/>
            <person name="Cole S.T."/>
        </authorList>
    </citation>
    <scope>NUCLEOTIDE SEQUENCE [LARGE SCALE GENOMIC DNA]</scope>
    <source>
        <strain>BCG / Pasteur 1173P2</strain>
    </source>
</reference>
<sequence>MNDSNDTSVAGGAAGADSRVLSADSALTERQRTILDVIRASVTSRGYPPSIREIGDAVGLTSTSSVAHQLRTLERKGYLRRDPNRPRAVNVRGADDAALPPVTEVAGSDALPEPTFAPVLGRIAAGGPILAEEAVEDVFPLPRELVGEGTLFLLKVIGDSMVEAAICDGDWVVVRQQNVADNGDIVAAMIDGEATVKTFKRAGGQVWLMPHNPAFDPIPGNDATVLGKVVTVIRKV</sequence>
<gene>
    <name evidence="1" type="primary">lexA</name>
    <name type="ordered locus">BCG_2733</name>
</gene>